<sequence length="64" mass="7418">MAKSKGARIIVTLECTECRTNPDKRSPGVSRYTSTKNRRNTTNRLELKKFCTHCNKHTVHKEIK</sequence>
<reference key="1">
    <citation type="journal article" date="2001" name="DNA Res.">
        <title>Complete genomic sequence of the filamentous nitrogen-fixing cyanobacterium Anabaena sp. strain PCC 7120.</title>
        <authorList>
            <person name="Kaneko T."/>
            <person name="Nakamura Y."/>
            <person name="Wolk C.P."/>
            <person name="Kuritz T."/>
            <person name="Sasamoto S."/>
            <person name="Watanabe A."/>
            <person name="Iriguchi M."/>
            <person name="Ishikawa A."/>
            <person name="Kawashima K."/>
            <person name="Kimura T."/>
            <person name="Kishida Y."/>
            <person name="Kohara M."/>
            <person name="Matsumoto M."/>
            <person name="Matsuno A."/>
            <person name="Muraki A."/>
            <person name="Nakazaki N."/>
            <person name="Shimpo S."/>
            <person name="Sugimoto M."/>
            <person name="Takazawa M."/>
            <person name="Yamada M."/>
            <person name="Yasuda M."/>
            <person name="Tabata S."/>
        </authorList>
    </citation>
    <scope>NUCLEOTIDE SEQUENCE [LARGE SCALE GENOMIC DNA]</scope>
    <source>
        <strain>PCC 7120 / SAG 25.82 / UTEX 2576</strain>
    </source>
</reference>
<name>RL33_NOSS1</name>
<evidence type="ECO:0000255" key="1">
    <source>
        <dbReference type="HAMAP-Rule" id="MF_00294"/>
    </source>
</evidence>
<evidence type="ECO:0000305" key="2"/>
<comment type="similarity">
    <text evidence="1">Belongs to the bacterial ribosomal protein bL33 family.</text>
</comment>
<organism>
    <name type="scientific">Nostoc sp. (strain PCC 7120 / SAG 25.82 / UTEX 2576)</name>
    <dbReference type="NCBI Taxonomy" id="103690"/>
    <lineage>
        <taxon>Bacteria</taxon>
        <taxon>Bacillati</taxon>
        <taxon>Cyanobacteriota</taxon>
        <taxon>Cyanophyceae</taxon>
        <taxon>Nostocales</taxon>
        <taxon>Nostocaceae</taxon>
        <taxon>Nostoc</taxon>
    </lineage>
</organism>
<keyword id="KW-1185">Reference proteome</keyword>
<keyword id="KW-0687">Ribonucleoprotein</keyword>
<keyword id="KW-0689">Ribosomal protein</keyword>
<proteinExistence type="inferred from homology"/>
<protein>
    <recommendedName>
        <fullName evidence="1">Large ribosomal subunit protein bL33</fullName>
    </recommendedName>
    <alternativeName>
        <fullName evidence="2">50S ribosomal protein L33</fullName>
    </alternativeName>
</protein>
<dbReference type="EMBL" id="BA000019">
    <property type="protein sequence ID" value="BAB76151.1"/>
    <property type="molecule type" value="Genomic_DNA"/>
</dbReference>
<dbReference type="PIR" id="AD2362">
    <property type="entry name" value="AD2362"/>
</dbReference>
<dbReference type="RefSeq" id="WP_010998585.1">
    <property type="nucleotide sequence ID" value="NZ_RSCN01000054.1"/>
</dbReference>
<dbReference type="STRING" id="103690.gene:10496501"/>
<dbReference type="GeneID" id="78220018"/>
<dbReference type="KEGG" id="ana:asl4452"/>
<dbReference type="eggNOG" id="COG0267">
    <property type="taxonomic scope" value="Bacteria"/>
</dbReference>
<dbReference type="OrthoDB" id="9801333at2"/>
<dbReference type="Proteomes" id="UP000002483">
    <property type="component" value="Chromosome"/>
</dbReference>
<dbReference type="GO" id="GO:0005737">
    <property type="term" value="C:cytoplasm"/>
    <property type="evidence" value="ECO:0007669"/>
    <property type="project" value="UniProtKB-ARBA"/>
</dbReference>
<dbReference type="GO" id="GO:1990904">
    <property type="term" value="C:ribonucleoprotein complex"/>
    <property type="evidence" value="ECO:0007669"/>
    <property type="project" value="UniProtKB-KW"/>
</dbReference>
<dbReference type="GO" id="GO:0005840">
    <property type="term" value="C:ribosome"/>
    <property type="evidence" value="ECO:0007669"/>
    <property type="project" value="UniProtKB-KW"/>
</dbReference>
<dbReference type="GO" id="GO:0003735">
    <property type="term" value="F:structural constituent of ribosome"/>
    <property type="evidence" value="ECO:0007669"/>
    <property type="project" value="InterPro"/>
</dbReference>
<dbReference type="GO" id="GO:0006412">
    <property type="term" value="P:translation"/>
    <property type="evidence" value="ECO:0007669"/>
    <property type="project" value="UniProtKB-UniRule"/>
</dbReference>
<dbReference type="Gene3D" id="2.20.28.120">
    <property type="entry name" value="Ribosomal protein L33"/>
    <property type="match status" value="1"/>
</dbReference>
<dbReference type="HAMAP" id="MF_00294">
    <property type="entry name" value="Ribosomal_bL33"/>
    <property type="match status" value="1"/>
</dbReference>
<dbReference type="InterPro" id="IPR001705">
    <property type="entry name" value="Ribosomal_bL33"/>
</dbReference>
<dbReference type="InterPro" id="IPR018264">
    <property type="entry name" value="Ribosomal_bL33_CS"/>
</dbReference>
<dbReference type="InterPro" id="IPR038584">
    <property type="entry name" value="Ribosomal_bL33_sf"/>
</dbReference>
<dbReference type="InterPro" id="IPR011332">
    <property type="entry name" value="Ribosomal_zn-bd"/>
</dbReference>
<dbReference type="NCBIfam" id="NF001764">
    <property type="entry name" value="PRK00504.1"/>
    <property type="match status" value="1"/>
</dbReference>
<dbReference type="NCBIfam" id="NF001860">
    <property type="entry name" value="PRK00595.1"/>
    <property type="match status" value="1"/>
</dbReference>
<dbReference type="NCBIfam" id="TIGR01023">
    <property type="entry name" value="rpmG_bact"/>
    <property type="match status" value="1"/>
</dbReference>
<dbReference type="PANTHER" id="PTHR43168">
    <property type="entry name" value="50S RIBOSOMAL PROTEIN L33, CHLOROPLASTIC"/>
    <property type="match status" value="1"/>
</dbReference>
<dbReference type="PANTHER" id="PTHR43168:SF2">
    <property type="entry name" value="LARGE RIBOSOMAL SUBUNIT PROTEIN BL33C"/>
    <property type="match status" value="1"/>
</dbReference>
<dbReference type="Pfam" id="PF00471">
    <property type="entry name" value="Ribosomal_L33"/>
    <property type="match status" value="1"/>
</dbReference>
<dbReference type="SUPFAM" id="SSF57829">
    <property type="entry name" value="Zn-binding ribosomal proteins"/>
    <property type="match status" value="1"/>
</dbReference>
<dbReference type="PROSITE" id="PS00582">
    <property type="entry name" value="RIBOSOMAL_L33"/>
    <property type="match status" value="1"/>
</dbReference>
<feature type="chain" id="PRO_0000170134" description="Large ribosomal subunit protein bL33">
    <location>
        <begin position="1"/>
        <end position="64"/>
    </location>
</feature>
<gene>
    <name evidence="1" type="primary">rpmG</name>
    <name evidence="1" type="synonym">rpl33</name>
    <name type="ordered locus">asl4452</name>
</gene>
<accession>Q8YNV9</accession>